<protein>
    <recommendedName>
        <fullName evidence="1">Octanoyltransferase</fullName>
        <ecNumber evidence="1">2.3.1.181</ecNumber>
    </recommendedName>
    <alternativeName>
        <fullName evidence="1">Lipoate-protein ligase B</fullName>
    </alternativeName>
    <alternativeName>
        <fullName evidence="1">Lipoyl/octanoyl transferase</fullName>
    </alternativeName>
    <alternativeName>
        <fullName evidence="1">Octanoyl-[acyl-carrier-protein]-protein N-octanoyltransferase</fullName>
    </alternativeName>
</protein>
<dbReference type="EC" id="2.3.1.181" evidence="1"/>
<dbReference type="EMBL" id="CP001197">
    <property type="protein sequence ID" value="ACL08348.1"/>
    <property type="molecule type" value="Genomic_DNA"/>
</dbReference>
<dbReference type="SMR" id="B8DRR1"/>
<dbReference type="STRING" id="883.DvMF_1400"/>
<dbReference type="KEGG" id="dvm:DvMF_1400"/>
<dbReference type="eggNOG" id="COG0321">
    <property type="taxonomic scope" value="Bacteria"/>
</dbReference>
<dbReference type="HOGENOM" id="CLU_035168_1_3_7"/>
<dbReference type="OrthoDB" id="9787061at2"/>
<dbReference type="UniPathway" id="UPA00538">
    <property type="reaction ID" value="UER00592"/>
</dbReference>
<dbReference type="GO" id="GO:0005737">
    <property type="term" value="C:cytoplasm"/>
    <property type="evidence" value="ECO:0007669"/>
    <property type="project" value="UniProtKB-SubCell"/>
</dbReference>
<dbReference type="GO" id="GO:0033819">
    <property type="term" value="F:lipoyl(octanoyl) transferase activity"/>
    <property type="evidence" value="ECO:0007669"/>
    <property type="project" value="UniProtKB-EC"/>
</dbReference>
<dbReference type="GO" id="GO:0036211">
    <property type="term" value="P:protein modification process"/>
    <property type="evidence" value="ECO:0007669"/>
    <property type="project" value="InterPro"/>
</dbReference>
<dbReference type="CDD" id="cd16444">
    <property type="entry name" value="LipB"/>
    <property type="match status" value="1"/>
</dbReference>
<dbReference type="Gene3D" id="3.30.930.10">
    <property type="entry name" value="Bira Bifunctional Protein, Domain 2"/>
    <property type="match status" value="1"/>
</dbReference>
<dbReference type="HAMAP" id="MF_00013">
    <property type="entry name" value="LipB"/>
    <property type="match status" value="1"/>
</dbReference>
<dbReference type="InterPro" id="IPR045864">
    <property type="entry name" value="aa-tRNA-synth_II/BPL/LPL"/>
</dbReference>
<dbReference type="InterPro" id="IPR004143">
    <property type="entry name" value="BPL_LPL_catalytic"/>
</dbReference>
<dbReference type="InterPro" id="IPR000544">
    <property type="entry name" value="Octanoyltransferase"/>
</dbReference>
<dbReference type="InterPro" id="IPR020605">
    <property type="entry name" value="Octanoyltransferase_CS"/>
</dbReference>
<dbReference type="NCBIfam" id="TIGR00214">
    <property type="entry name" value="lipB"/>
    <property type="match status" value="1"/>
</dbReference>
<dbReference type="PANTHER" id="PTHR10993:SF7">
    <property type="entry name" value="LIPOYLTRANSFERASE 2, MITOCHONDRIAL-RELATED"/>
    <property type="match status" value="1"/>
</dbReference>
<dbReference type="PANTHER" id="PTHR10993">
    <property type="entry name" value="OCTANOYLTRANSFERASE"/>
    <property type="match status" value="1"/>
</dbReference>
<dbReference type="Pfam" id="PF21948">
    <property type="entry name" value="LplA-B_cat"/>
    <property type="match status" value="1"/>
</dbReference>
<dbReference type="PIRSF" id="PIRSF016262">
    <property type="entry name" value="LPLase"/>
    <property type="match status" value="1"/>
</dbReference>
<dbReference type="SUPFAM" id="SSF55681">
    <property type="entry name" value="Class II aaRS and biotin synthetases"/>
    <property type="match status" value="1"/>
</dbReference>
<dbReference type="PROSITE" id="PS51733">
    <property type="entry name" value="BPL_LPL_CATALYTIC"/>
    <property type="match status" value="1"/>
</dbReference>
<dbReference type="PROSITE" id="PS01313">
    <property type="entry name" value="LIPB"/>
    <property type="match status" value="1"/>
</dbReference>
<accession>B8DRR1</accession>
<comment type="function">
    <text evidence="1">Catalyzes the transfer of endogenously produced octanoic acid from octanoyl-acyl-carrier-protein onto the lipoyl domains of lipoate-dependent enzymes. Lipoyl-ACP can also act as a substrate although octanoyl-ACP is likely to be the physiological substrate.</text>
</comment>
<comment type="catalytic activity">
    <reaction evidence="1">
        <text>octanoyl-[ACP] + L-lysyl-[protein] = N(6)-octanoyl-L-lysyl-[protein] + holo-[ACP] + H(+)</text>
        <dbReference type="Rhea" id="RHEA:17665"/>
        <dbReference type="Rhea" id="RHEA-COMP:9636"/>
        <dbReference type="Rhea" id="RHEA-COMP:9685"/>
        <dbReference type="Rhea" id="RHEA-COMP:9752"/>
        <dbReference type="Rhea" id="RHEA-COMP:9928"/>
        <dbReference type="ChEBI" id="CHEBI:15378"/>
        <dbReference type="ChEBI" id="CHEBI:29969"/>
        <dbReference type="ChEBI" id="CHEBI:64479"/>
        <dbReference type="ChEBI" id="CHEBI:78463"/>
        <dbReference type="ChEBI" id="CHEBI:78809"/>
        <dbReference type="EC" id="2.3.1.181"/>
    </reaction>
</comment>
<comment type="pathway">
    <text evidence="1">Protein modification; protein lipoylation via endogenous pathway; protein N(6)-(lipoyl)lysine from octanoyl-[acyl-carrier-protein]: step 1/2.</text>
</comment>
<comment type="subcellular location">
    <subcellularLocation>
        <location evidence="1">Cytoplasm</location>
    </subcellularLocation>
</comment>
<comment type="miscellaneous">
    <text evidence="1">In the reaction, the free carboxyl group of octanoic acid is attached via an amide linkage to the epsilon-amino group of a specific lysine residue of lipoyl domains of lipoate-dependent enzymes.</text>
</comment>
<comment type="similarity">
    <text evidence="1">Belongs to the LipB family.</text>
</comment>
<proteinExistence type="inferred from homology"/>
<gene>
    <name evidence="1" type="primary">lipB</name>
    <name type="ordered locus">DvMF_1400</name>
</gene>
<reference key="1">
    <citation type="submission" date="2008-10" db="EMBL/GenBank/DDBJ databases">
        <title>Complete sequence of Desulfovibrio vulgaris str. 'Miyazaki F'.</title>
        <authorList>
            <person name="Lucas S."/>
            <person name="Copeland A."/>
            <person name="Lapidus A."/>
            <person name="Glavina del Rio T."/>
            <person name="Dalin E."/>
            <person name="Tice H."/>
            <person name="Bruce D."/>
            <person name="Goodwin L."/>
            <person name="Pitluck S."/>
            <person name="Sims D."/>
            <person name="Brettin T."/>
            <person name="Detter J.C."/>
            <person name="Han C."/>
            <person name="Larimer F."/>
            <person name="Land M."/>
            <person name="Hauser L."/>
            <person name="Kyrpides N."/>
            <person name="Mikhailova N."/>
            <person name="Hazen T.C."/>
            <person name="Richardson P."/>
        </authorList>
    </citation>
    <scope>NUCLEOTIDE SEQUENCE [LARGE SCALE GENOMIC DNA]</scope>
    <source>
        <strain>DSM 19637 / Miyazaki F</strain>
    </source>
</reference>
<sequence length="218" mass="23929">MNIIDLGLIRYAEADALQRARLEEVAAGAEETLYLLEHHPVITLGRNGGGENLHVGREWLATQGIDLVQSSRGGNITCHFPGQLVAYPVFRVAKRPGGLRQMFHDLEEVVITTLAHFGLSAARWEGRPGVWIENRKICSIGMAVRRWTSYHGFALNVGRDLSLFEMITLCGLPDAQATSLYRELGGDAPTMQEVKDVCARQFRAIFADSTVAAGQAAL</sequence>
<organism>
    <name type="scientific">Nitratidesulfovibrio vulgaris (strain DSM 19637 / Miyazaki F)</name>
    <name type="common">Desulfovibrio vulgaris</name>
    <dbReference type="NCBI Taxonomy" id="883"/>
    <lineage>
        <taxon>Bacteria</taxon>
        <taxon>Pseudomonadati</taxon>
        <taxon>Thermodesulfobacteriota</taxon>
        <taxon>Desulfovibrionia</taxon>
        <taxon>Desulfovibrionales</taxon>
        <taxon>Desulfovibrionaceae</taxon>
        <taxon>Nitratidesulfovibrio</taxon>
    </lineage>
</organism>
<feature type="chain" id="PRO_1000116279" description="Octanoyltransferase">
    <location>
        <begin position="1"/>
        <end position="218"/>
    </location>
</feature>
<feature type="domain" description="BPL/LPL catalytic" evidence="2">
    <location>
        <begin position="27"/>
        <end position="210"/>
    </location>
</feature>
<feature type="active site" description="Acyl-thioester intermediate" evidence="1">
    <location>
        <position position="170"/>
    </location>
</feature>
<feature type="binding site" evidence="1">
    <location>
        <begin position="72"/>
        <end position="79"/>
    </location>
    <ligand>
        <name>substrate</name>
    </ligand>
</feature>
<feature type="binding site" evidence="1">
    <location>
        <begin position="139"/>
        <end position="141"/>
    </location>
    <ligand>
        <name>substrate</name>
    </ligand>
</feature>
<feature type="binding site" evidence="1">
    <location>
        <begin position="152"/>
        <end position="154"/>
    </location>
    <ligand>
        <name>substrate</name>
    </ligand>
</feature>
<feature type="site" description="Lowers pKa of active site Cys" evidence="1">
    <location>
        <position position="136"/>
    </location>
</feature>
<keyword id="KW-0012">Acyltransferase</keyword>
<keyword id="KW-0963">Cytoplasm</keyword>
<keyword id="KW-0808">Transferase</keyword>
<name>LIPB_NITV9</name>
<evidence type="ECO:0000255" key="1">
    <source>
        <dbReference type="HAMAP-Rule" id="MF_00013"/>
    </source>
</evidence>
<evidence type="ECO:0000255" key="2">
    <source>
        <dbReference type="PROSITE-ProRule" id="PRU01067"/>
    </source>
</evidence>